<keyword id="KW-0131">Cell cycle</keyword>
<keyword id="KW-0132">Cell division</keyword>
<keyword id="KW-0133">Cell shape</keyword>
<keyword id="KW-0961">Cell wall biogenesis/degradation</keyword>
<keyword id="KW-0963">Cytoplasm</keyword>
<keyword id="KW-0274">FAD</keyword>
<keyword id="KW-0285">Flavoprotein</keyword>
<keyword id="KW-0521">NADP</keyword>
<keyword id="KW-0560">Oxidoreductase</keyword>
<keyword id="KW-0573">Peptidoglycan synthesis</keyword>
<keyword id="KW-1185">Reference proteome</keyword>
<organism>
    <name type="scientific">Streptococcus pneumoniae serotype 2 (strain D39 / NCTC 7466)</name>
    <dbReference type="NCBI Taxonomy" id="373153"/>
    <lineage>
        <taxon>Bacteria</taxon>
        <taxon>Bacillati</taxon>
        <taxon>Bacillota</taxon>
        <taxon>Bacilli</taxon>
        <taxon>Lactobacillales</taxon>
        <taxon>Streptococcaceae</taxon>
        <taxon>Streptococcus</taxon>
    </lineage>
</organism>
<comment type="function">
    <text evidence="1">Cell wall formation.</text>
</comment>
<comment type="catalytic activity">
    <reaction evidence="1">
        <text>UDP-N-acetyl-alpha-D-muramate + NADP(+) = UDP-N-acetyl-3-O-(1-carboxyvinyl)-alpha-D-glucosamine + NADPH + H(+)</text>
        <dbReference type="Rhea" id="RHEA:12248"/>
        <dbReference type="ChEBI" id="CHEBI:15378"/>
        <dbReference type="ChEBI" id="CHEBI:57783"/>
        <dbReference type="ChEBI" id="CHEBI:58349"/>
        <dbReference type="ChEBI" id="CHEBI:68483"/>
        <dbReference type="ChEBI" id="CHEBI:70757"/>
        <dbReference type="EC" id="1.3.1.98"/>
    </reaction>
</comment>
<comment type="cofactor">
    <cofactor evidence="1">
        <name>FAD</name>
        <dbReference type="ChEBI" id="CHEBI:57692"/>
    </cofactor>
</comment>
<comment type="pathway">
    <text evidence="1">Cell wall biogenesis; peptidoglycan biosynthesis.</text>
</comment>
<comment type="subcellular location">
    <subcellularLocation>
        <location evidence="1">Cytoplasm</location>
    </subcellularLocation>
</comment>
<comment type="similarity">
    <text evidence="1">Belongs to the MurB family.</text>
</comment>
<gene>
    <name evidence="1" type="primary">murB</name>
    <name type="ordered locus">SPD_1222</name>
</gene>
<sequence>MSVREKMLEILEGIDIRFKEPLHSYSYTKVGGEADYLVFPRNRFELARVVKFANQENIPWMVLGNASNIIVRDGGIRGFVILCDKLNNVSVDGYTIEAEAGANLIETTRIALRHSLTGFEFACGIPGSVGGAVFMNAGAYGGEIAHILQSCKVLTKDGEIETLSAKDLAFGYRHSAIQESGAVVLSVKFALAPGTHQVIKQEMDRLTHLRELKQPLEYPSCGSVFKRPVGHFAGQLISEAGLKGYRIGGVEVSEKHAGFMINVADGTAKDYEDLIQSVIEKVKEHSGITLEREVRILGESLSVAKMYAGGFTPCKR</sequence>
<evidence type="ECO:0000255" key="1">
    <source>
        <dbReference type="HAMAP-Rule" id="MF_00037"/>
    </source>
</evidence>
<dbReference type="EC" id="1.3.1.98" evidence="1"/>
<dbReference type="EMBL" id="CP000410">
    <property type="protein sequence ID" value="ABJ54032.1"/>
    <property type="molecule type" value="Genomic_DNA"/>
</dbReference>
<dbReference type="RefSeq" id="WP_000116181.1">
    <property type="nucleotide sequence ID" value="NZ_JAMLJR010000005.1"/>
</dbReference>
<dbReference type="SMR" id="Q04JV9"/>
<dbReference type="PaxDb" id="373153-SPD_1222"/>
<dbReference type="KEGG" id="spd:SPD_1222"/>
<dbReference type="eggNOG" id="COG0812">
    <property type="taxonomic scope" value="Bacteria"/>
</dbReference>
<dbReference type="HOGENOM" id="CLU_035304_1_1_9"/>
<dbReference type="BioCyc" id="SPNE373153:G1G6V-1322-MONOMER"/>
<dbReference type="UniPathway" id="UPA00219"/>
<dbReference type="Proteomes" id="UP000001452">
    <property type="component" value="Chromosome"/>
</dbReference>
<dbReference type="GO" id="GO:0005829">
    <property type="term" value="C:cytosol"/>
    <property type="evidence" value="ECO:0007669"/>
    <property type="project" value="TreeGrafter"/>
</dbReference>
<dbReference type="GO" id="GO:0071949">
    <property type="term" value="F:FAD binding"/>
    <property type="evidence" value="ECO:0007669"/>
    <property type="project" value="InterPro"/>
</dbReference>
<dbReference type="GO" id="GO:0008762">
    <property type="term" value="F:UDP-N-acetylmuramate dehydrogenase activity"/>
    <property type="evidence" value="ECO:0007669"/>
    <property type="project" value="UniProtKB-UniRule"/>
</dbReference>
<dbReference type="GO" id="GO:0051301">
    <property type="term" value="P:cell division"/>
    <property type="evidence" value="ECO:0007669"/>
    <property type="project" value="UniProtKB-KW"/>
</dbReference>
<dbReference type="GO" id="GO:0071555">
    <property type="term" value="P:cell wall organization"/>
    <property type="evidence" value="ECO:0007669"/>
    <property type="project" value="UniProtKB-KW"/>
</dbReference>
<dbReference type="GO" id="GO:0009252">
    <property type="term" value="P:peptidoglycan biosynthetic process"/>
    <property type="evidence" value="ECO:0007669"/>
    <property type="project" value="UniProtKB-UniRule"/>
</dbReference>
<dbReference type="GO" id="GO:0008360">
    <property type="term" value="P:regulation of cell shape"/>
    <property type="evidence" value="ECO:0007669"/>
    <property type="project" value="UniProtKB-KW"/>
</dbReference>
<dbReference type="Gene3D" id="3.30.465.10">
    <property type="match status" value="1"/>
</dbReference>
<dbReference type="Gene3D" id="3.90.78.10">
    <property type="entry name" value="UDP-N-acetylenolpyruvoylglucosamine reductase, C-terminal domain"/>
    <property type="match status" value="1"/>
</dbReference>
<dbReference type="Gene3D" id="3.30.43.10">
    <property type="entry name" value="Uridine Diphospho-n-acetylenolpyruvylglucosamine Reductase, domain 2"/>
    <property type="match status" value="1"/>
</dbReference>
<dbReference type="HAMAP" id="MF_00037">
    <property type="entry name" value="MurB"/>
    <property type="match status" value="1"/>
</dbReference>
<dbReference type="InterPro" id="IPR016166">
    <property type="entry name" value="FAD-bd_PCMH"/>
</dbReference>
<dbReference type="InterPro" id="IPR036318">
    <property type="entry name" value="FAD-bd_PCMH-like_sf"/>
</dbReference>
<dbReference type="InterPro" id="IPR016167">
    <property type="entry name" value="FAD-bd_PCMH_sub1"/>
</dbReference>
<dbReference type="InterPro" id="IPR016169">
    <property type="entry name" value="FAD-bd_PCMH_sub2"/>
</dbReference>
<dbReference type="InterPro" id="IPR003170">
    <property type="entry name" value="MurB"/>
</dbReference>
<dbReference type="InterPro" id="IPR011601">
    <property type="entry name" value="MurB_C"/>
</dbReference>
<dbReference type="InterPro" id="IPR036635">
    <property type="entry name" value="MurB_C_sf"/>
</dbReference>
<dbReference type="InterPro" id="IPR006094">
    <property type="entry name" value="Oxid_FAD_bind_N"/>
</dbReference>
<dbReference type="NCBIfam" id="TIGR00179">
    <property type="entry name" value="murB"/>
    <property type="match status" value="1"/>
</dbReference>
<dbReference type="NCBIfam" id="NF010480">
    <property type="entry name" value="PRK13905.1"/>
    <property type="match status" value="1"/>
</dbReference>
<dbReference type="PANTHER" id="PTHR21071">
    <property type="entry name" value="UDP-N-ACETYLENOLPYRUVOYLGLUCOSAMINE REDUCTASE"/>
    <property type="match status" value="1"/>
</dbReference>
<dbReference type="PANTHER" id="PTHR21071:SF4">
    <property type="entry name" value="UDP-N-ACETYLENOLPYRUVOYLGLUCOSAMINE REDUCTASE"/>
    <property type="match status" value="1"/>
</dbReference>
<dbReference type="Pfam" id="PF01565">
    <property type="entry name" value="FAD_binding_4"/>
    <property type="match status" value="1"/>
</dbReference>
<dbReference type="Pfam" id="PF02873">
    <property type="entry name" value="MurB_C"/>
    <property type="match status" value="1"/>
</dbReference>
<dbReference type="SUPFAM" id="SSF56176">
    <property type="entry name" value="FAD-binding/transporter-associated domain-like"/>
    <property type="match status" value="1"/>
</dbReference>
<dbReference type="SUPFAM" id="SSF56194">
    <property type="entry name" value="Uridine diphospho-N-Acetylenolpyruvylglucosamine reductase, MurB, C-terminal domain"/>
    <property type="match status" value="1"/>
</dbReference>
<dbReference type="PROSITE" id="PS51387">
    <property type="entry name" value="FAD_PCMH"/>
    <property type="match status" value="1"/>
</dbReference>
<reference key="1">
    <citation type="journal article" date="2007" name="J. Bacteriol.">
        <title>Genome sequence of Avery's virulent serotype 2 strain D39 of Streptococcus pneumoniae and comparison with that of unencapsulated laboratory strain R6.</title>
        <authorList>
            <person name="Lanie J.A."/>
            <person name="Ng W.-L."/>
            <person name="Kazmierczak K.M."/>
            <person name="Andrzejewski T.M."/>
            <person name="Davidsen T.M."/>
            <person name="Wayne K.J."/>
            <person name="Tettelin H."/>
            <person name="Glass J.I."/>
            <person name="Winkler M.E."/>
        </authorList>
    </citation>
    <scope>NUCLEOTIDE SEQUENCE [LARGE SCALE GENOMIC DNA]</scope>
    <source>
        <strain>D39 / NCTC 7466</strain>
    </source>
</reference>
<name>MURB_STRP2</name>
<accession>Q04JV9</accession>
<feature type="chain" id="PRO_1000002917" description="UDP-N-acetylenolpyruvoylglucosamine reductase">
    <location>
        <begin position="1"/>
        <end position="316"/>
    </location>
</feature>
<feature type="domain" description="FAD-binding PCMH-type" evidence="1">
    <location>
        <begin position="30"/>
        <end position="194"/>
    </location>
</feature>
<feature type="active site" evidence="1">
    <location>
        <position position="173"/>
    </location>
</feature>
<feature type="active site" description="Proton donor" evidence="1">
    <location>
        <position position="223"/>
    </location>
</feature>
<feature type="active site" evidence="1">
    <location>
        <position position="293"/>
    </location>
</feature>
<proteinExistence type="inferred from homology"/>
<protein>
    <recommendedName>
        <fullName evidence="1">UDP-N-acetylenolpyruvoylglucosamine reductase</fullName>
        <ecNumber evidence="1">1.3.1.98</ecNumber>
    </recommendedName>
    <alternativeName>
        <fullName evidence="1">UDP-N-acetylmuramate dehydrogenase</fullName>
    </alternativeName>
</protein>